<evidence type="ECO:0000255" key="1">
    <source>
        <dbReference type="HAMAP-Rule" id="MF_00600"/>
    </source>
</evidence>
<reference key="1">
    <citation type="submission" date="2007-02" db="EMBL/GenBank/DDBJ databases">
        <title>Complete sequence of Mycobacterium sp. JLS.</title>
        <authorList>
            <consortium name="US DOE Joint Genome Institute"/>
            <person name="Copeland A."/>
            <person name="Lucas S."/>
            <person name="Lapidus A."/>
            <person name="Barry K."/>
            <person name="Detter J.C."/>
            <person name="Glavina del Rio T."/>
            <person name="Hammon N."/>
            <person name="Israni S."/>
            <person name="Dalin E."/>
            <person name="Tice H."/>
            <person name="Pitluck S."/>
            <person name="Chain P."/>
            <person name="Malfatti S."/>
            <person name="Shin M."/>
            <person name="Vergez L."/>
            <person name="Schmutz J."/>
            <person name="Larimer F."/>
            <person name="Land M."/>
            <person name="Hauser L."/>
            <person name="Kyrpides N."/>
            <person name="Mikhailova N."/>
            <person name="Miller C.D."/>
            <person name="Anderson A.J."/>
            <person name="Sims R.C."/>
            <person name="Richardson P."/>
        </authorList>
    </citation>
    <scope>NUCLEOTIDE SEQUENCE [LARGE SCALE GENOMIC DNA]</scope>
    <source>
        <strain>JLS</strain>
    </source>
</reference>
<proteinExistence type="inferred from homology"/>
<gene>
    <name evidence="1" type="primary">groEL1</name>
    <name evidence="1" type="synonym">groL1</name>
    <name type="ordered locus">Mjls_1181</name>
</gene>
<organism>
    <name type="scientific">Mycobacterium sp. (strain JLS)</name>
    <dbReference type="NCBI Taxonomy" id="164757"/>
    <lineage>
        <taxon>Bacteria</taxon>
        <taxon>Bacillati</taxon>
        <taxon>Actinomycetota</taxon>
        <taxon>Actinomycetes</taxon>
        <taxon>Mycobacteriales</taxon>
        <taxon>Mycobacteriaceae</taxon>
        <taxon>Mycobacterium</taxon>
    </lineage>
</organism>
<comment type="function">
    <text evidence="1">Together with its co-chaperonin GroES, plays an essential role in assisting protein folding. The GroEL-GroES system forms a nano-cage that allows encapsulation of the non-native substrate proteins and provides a physical environment optimized to promote and accelerate protein folding.</text>
</comment>
<comment type="catalytic activity">
    <reaction evidence="1">
        <text>ATP + H2O + a folded polypeptide = ADP + phosphate + an unfolded polypeptide.</text>
        <dbReference type="EC" id="5.6.1.7"/>
    </reaction>
</comment>
<comment type="subunit">
    <text evidence="1">Forms a cylinder of 14 subunits composed of two heptameric rings stacked back-to-back. Interacts with the co-chaperonin GroES.</text>
</comment>
<comment type="subcellular location">
    <subcellularLocation>
        <location evidence="1">Cytoplasm</location>
    </subcellularLocation>
</comment>
<comment type="similarity">
    <text evidence="1">Belongs to the chaperonin (HSP60) family.</text>
</comment>
<sequence length="540" mass="56003">MSKQIEFNETARRAMEIGVDKLADAVKVTLGPRGRNVVLAKSWGGPTVTNDGVTIAREIDLEDPFENLGAQLVKSVATKTNDVAGDGTTTATVLAQALVRAGLRNVAAGANPIALGAGISKAADAVSEALLAAATPVDDKSGIAQVATVSSRDEQIGELVGEAMTKVGHDGVVTVEESSTLNTELEVTEGVGFDKGFISAYFVTDFDSQEAVLEDALVLLHREKVSSLPDLLPLLEKVAEAGKPLLIIAEDVEGEALSTLVVNAIRKTLKAVAVKAPFFGDRRKAFLDDLAVVTGGQVINPDVGLVLREVGLDVLGTARRVVVTKDSTVIVDGGGSADAIADRAKQLRAEIEATDSDWDREKLEERLAKLAGGVAVIKVGAATETDLKKRKEAVEDAVSAAKAAVEEGIVTGGGAALVQARKALDSLRGSVSGDEALGVEVFNSALSAPLYWIATNAGLDGSVVVNKVSELPAGQGFNAATLEFGDLLADGVVDPVKVTRSAVLNAASVARMVLTTETAIVDKPAEEEDHGHGHHHGHAH</sequence>
<accession>A3PVQ7</accession>
<name>CH601_MYCSJ</name>
<dbReference type="EC" id="5.6.1.7" evidence="1"/>
<dbReference type="EMBL" id="CP000580">
    <property type="protein sequence ID" value="ABN96984.1"/>
    <property type="molecule type" value="Genomic_DNA"/>
</dbReference>
<dbReference type="SMR" id="A3PVQ7"/>
<dbReference type="KEGG" id="mjl:Mjls_1181"/>
<dbReference type="HOGENOM" id="CLU_016503_3_0_11"/>
<dbReference type="BioCyc" id="MSP164757:G1G8C-1193-MONOMER"/>
<dbReference type="GO" id="GO:0005737">
    <property type="term" value="C:cytoplasm"/>
    <property type="evidence" value="ECO:0007669"/>
    <property type="project" value="UniProtKB-SubCell"/>
</dbReference>
<dbReference type="GO" id="GO:0005524">
    <property type="term" value="F:ATP binding"/>
    <property type="evidence" value="ECO:0007669"/>
    <property type="project" value="UniProtKB-UniRule"/>
</dbReference>
<dbReference type="GO" id="GO:0140662">
    <property type="term" value="F:ATP-dependent protein folding chaperone"/>
    <property type="evidence" value="ECO:0007669"/>
    <property type="project" value="InterPro"/>
</dbReference>
<dbReference type="GO" id="GO:0016853">
    <property type="term" value="F:isomerase activity"/>
    <property type="evidence" value="ECO:0007669"/>
    <property type="project" value="UniProtKB-KW"/>
</dbReference>
<dbReference type="GO" id="GO:0051082">
    <property type="term" value="F:unfolded protein binding"/>
    <property type="evidence" value="ECO:0007669"/>
    <property type="project" value="UniProtKB-UniRule"/>
</dbReference>
<dbReference type="GO" id="GO:0042026">
    <property type="term" value="P:protein refolding"/>
    <property type="evidence" value="ECO:0007669"/>
    <property type="project" value="UniProtKB-UniRule"/>
</dbReference>
<dbReference type="CDD" id="cd03344">
    <property type="entry name" value="GroEL"/>
    <property type="match status" value="1"/>
</dbReference>
<dbReference type="FunFam" id="3.50.7.10:FF:000001">
    <property type="entry name" value="60 kDa chaperonin"/>
    <property type="match status" value="1"/>
</dbReference>
<dbReference type="Gene3D" id="3.50.7.10">
    <property type="entry name" value="GroEL"/>
    <property type="match status" value="1"/>
</dbReference>
<dbReference type="Gene3D" id="1.10.560.10">
    <property type="entry name" value="GroEL-like equatorial domain"/>
    <property type="match status" value="1"/>
</dbReference>
<dbReference type="Gene3D" id="3.30.260.10">
    <property type="entry name" value="TCP-1-like chaperonin intermediate domain"/>
    <property type="match status" value="1"/>
</dbReference>
<dbReference type="HAMAP" id="MF_00600">
    <property type="entry name" value="CH60"/>
    <property type="match status" value="1"/>
</dbReference>
<dbReference type="InterPro" id="IPR018370">
    <property type="entry name" value="Chaperonin_Cpn60_CS"/>
</dbReference>
<dbReference type="InterPro" id="IPR001844">
    <property type="entry name" value="Cpn60/GroEL"/>
</dbReference>
<dbReference type="InterPro" id="IPR002423">
    <property type="entry name" value="Cpn60/GroEL/TCP-1"/>
</dbReference>
<dbReference type="InterPro" id="IPR027409">
    <property type="entry name" value="GroEL-like_apical_dom_sf"/>
</dbReference>
<dbReference type="InterPro" id="IPR027413">
    <property type="entry name" value="GROEL-like_equatorial_sf"/>
</dbReference>
<dbReference type="InterPro" id="IPR027410">
    <property type="entry name" value="TCP-1-like_intermed_sf"/>
</dbReference>
<dbReference type="NCBIfam" id="TIGR02348">
    <property type="entry name" value="GroEL"/>
    <property type="match status" value="1"/>
</dbReference>
<dbReference type="NCBIfam" id="NF000592">
    <property type="entry name" value="PRK00013.1"/>
    <property type="match status" value="1"/>
</dbReference>
<dbReference type="NCBIfam" id="NF009487">
    <property type="entry name" value="PRK12849.1"/>
    <property type="match status" value="1"/>
</dbReference>
<dbReference type="NCBIfam" id="NF009488">
    <property type="entry name" value="PRK12850.1"/>
    <property type="match status" value="1"/>
</dbReference>
<dbReference type="NCBIfam" id="NF009489">
    <property type="entry name" value="PRK12851.1"/>
    <property type="match status" value="1"/>
</dbReference>
<dbReference type="PANTHER" id="PTHR45633">
    <property type="entry name" value="60 KDA HEAT SHOCK PROTEIN, MITOCHONDRIAL"/>
    <property type="match status" value="1"/>
</dbReference>
<dbReference type="Pfam" id="PF00118">
    <property type="entry name" value="Cpn60_TCP1"/>
    <property type="match status" value="1"/>
</dbReference>
<dbReference type="PRINTS" id="PR00298">
    <property type="entry name" value="CHAPERONIN60"/>
</dbReference>
<dbReference type="SUPFAM" id="SSF52029">
    <property type="entry name" value="GroEL apical domain-like"/>
    <property type="match status" value="1"/>
</dbReference>
<dbReference type="SUPFAM" id="SSF48592">
    <property type="entry name" value="GroEL equatorial domain-like"/>
    <property type="match status" value="1"/>
</dbReference>
<dbReference type="SUPFAM" id="SSF54849">
    <property type="entry name" value="GroEL-intermediate domain like"/>
    <property type="match status" value="1"/>
</dbReference>
<dbReference type="PROSITE" id="PS00296">
    <property type="entry name" value="CHAPERONINS_CPN60"/>
    <property type="match status" value="1"/>
</dbReference>
<feature type="chain" id="PRO_0000332021" description="Chaperonin GroEL 1">
    <location>
        <begin position="1"/>
        <end position="540"/>
    </location>
</feature>
<feature type="binding site" evidence="1">
    <location>
        <begin position="29"/>
        <end position="32"/>
    </location>
    <ligand>
        <name>ATP</name>
        <dbReference type="ChEBI" id="CHEBI:30616"/>
    </ligand>
</feature>
<feature type="binding site" evidence="1">
    <location>
        <begin position="86"/>
        <end position="90"/>
    </location>
    <ligand>
        <name>ATP</name>
        <dbReference type="ChEBI" id="CHEBI:30616"/>
    </ligand>
</feature>
<feature type="binding site" evidence="1">
    <location>
        <position position="413"/>
    </location>
    <ligand>
        <name>ATP</name>
        <dbReference type="ChEBI" id="CHEBI:30616"/>
    </ligand>
</feature>
<feature type="binding site" evidence="1">
    <location>
        <begin position="478"/>
        <end position="480"/>
    </location>
    <ligand>
        <name>ATP</name>
        <dbReference type="ChEBI" id="CHEBI:30616"/>
    </ligand>
</feature>
<feature type="binding site" evidence="1">
    <location>
        <position position="494"/>
    </location>
    <ligand>
        <name>ATP</name>
        <dbReference type="ChEBI" id="CHEBI:30616"/>
    </ligand>
</feature>
<protein>
    <recommendedName>
        <fullName evidence="1">Chaperonin GroEL 1</fullName>
        <ecNumber evidence="1">5.6.1.7</ecNumber>
    </recommendedName>
    <alternativeName>
        <fullName evidence="1">60 kDa chaperonin 1</fullName>
    </alternativeName>
    <alternativeName>
        <fullName evidence="1">Chaperonin-60 1</fullName>
        <shortName evidence="1">Cpn60 1</shortName>
    </alternativeName>
</protein>
<keyword id="KW-0067">ATP-binding</keyword>
<keyword id="KW-0143">Chaperone</keyword>
<keyword id="KW-0963">Cytoplasm</keyword>
<keyword id="KW-0413">Isomerase</keyword>
<keyword id="KW-0547">Nucleotide-binding</keyword>